<gene>
    <name type="primary">RHOQ</name>
    <name type="synonym">ARHQ</name>
    <name type="synonym">RASL7A</name>
    <name type="synonym">TC10</name>
</gene>
<name>RHOQ_HUMAN</name>
<reference key="1">
    <citation type="journal article" date="1990" name="Mol. Cell. Biol.">
        <title>Characterization of four novel ras-like genes expressed in a human teratocarcinoma cell line.</title>
        <authorList>
            <person name="Drivas G.T."/>
            <person name="Shih A."/>
            <person name="Coutavas E."/>
            <person name="Rush M.G."/>
            <person name="D'Eustachio P."/>
        </authorList>
    </citation>
    <scope>NUCLEOTIDE SEQUENCE [MRNA]</scope>
</reference>
<reference key="2">
    <citation type="submission" date="2002-04" db="EMBL/GenBank/DDBJ databases">
        <title>cDNA clones of human proteins involved in signal transduction sequenced by the Guthrie cDNA resource center (www.cdna.org).</title>
        <authorList>
            <person name="Puhl H.L. III"/>
            <person name="Ikeda S.R."/>
            <person name="Aronstam R.S."/>
        </authorList>
    </citation>
    <scope>NUCLEOTIDE SEQUENCE [LARGE SCALE MRNA]</scope>
    <source>
        <tissue>Brain</tissue>
    </source>
</reference>
<reference key="3">
    <citation type="journal article" date="2003" name="Nature">
        <title>The DNA sequence and analysis of human chromosome 14.</title>
        <authorList>
            <person name="Heilig R."/>
            <person name="Eckenberg R."/>
            <person name="Petit J.-L."/>
            <person name="Fonknechten N."/>
            <person name="Da Silva C."/>
            <person name="Cattolico L."/>
            <person name="Levy M."/>
            <person name="Barbe V."/>
            <person name="De Berardinis V."/>
            <person name="Ureta-Vidal A."/>
            <person name="Pelletier E."/>
            <person name="Vico V."/>
            <person name="Anthouard V."/>
            <person name="Rowen L."/>
            <person name="Madan A."/>
            <person name="Qin S."/>
            <person name="Sun H."/>
            <person name="Du H."/>
            <person name="Pepin K."/>
            <person name="Artiguenave F."/>
            <person name="Robert C."/>
            <person name="Cruaud C."/>
            <person name="Bruels T."/>
            <person name="Jaillon O."/>
            <person name="Friedlander L."/>
            <person name="Samson G."/>
            <person name="Brottier P."/>
            <person name="Cure S."/>
            <person name="Segurens B."/>
            <person name="Aniere F."/>
            <person name="Samain S."/>
            <person name="Crespeau H."/>
            <person name="Abbasi N."/>
            <person name="Aiach N."/>
            <person name="Boscus D."/>
            <person name="Dickhoff R."/>
            <person name="Dors M."/>
            <person name="Dubois I."/>
            <person name="Friedman C."/>
            <person name="Gouyvenoux M."/>
            <person name="James R."/>
            <person name="Madan A."/>
            <person name="Mairey-Estrada B."/>
            <person name="Mangenot S."/>
            <person name="Martins N."/>
            <person name="Menard M."/>
            <person name="Oztas S."/>
            <person name="Ratcliffe A."/>
            <person name="Shaffer T."/>
            <person name="Trask B."/>
            <person name="Vacherie B."/>
            <person name="Bellemere C."/>
            <person name="Belser C."/>
            <person name="Besnard-Gonnet M."/>
            <person name="Bartol-Mavel D."/>
            <person name="Boutard M."/>
            <person name="Briez-Silla S."/>
            <person name="Combette S."/>
            <person name="Dufosse-Laurent V."/>
            <person name="Ferron C."/>
            <person name="Lechaplais C."/>
            <person name="Louesse C."/>
            <person name="Muselet D."/>
            <person name="Magdelenat G."/>
            <person name="Pateau E."/>
            <person name="Petit E."/>
            <person name="Sirvain-Trukniewicz P."/>
            <person name="Trybou A."/>
            <person name="Vega-Czarny N."/>
            <person name="Bataille E."/>
            <person name="Bluet E."/>
            <person name="Bordelais I."/>
            <person name="Dubois M."/>
            <person name="Dumont C."/>
            <person name="Guerin T."/>
            <person name="Haffray S."/>
            <person name="Hammadi R."/>
            <person name="Muanga J."/>
            <person name="Pellouin V."/>
            <person name="Robert D."/>
            <person name="Wunderle E."/>
            <person name="Gauguet G."/>
            <person name="Roy A."/>
            <person name="Sainte-Marthe L."/>
            <person name="Verdier J."/>
            <person name="Verdier-Discala C."/>
            <person name="Hillier L.W."/>
            <person name="Fulton L."/>
            <person name="McPherson J."/>
            <person name="Matsuda F."/>
            <person name="Wilson R."/>
            <person name="Scarpelli C."/>
            <person name="Gyapay G."/>
            <person name="Wincker P."/>
            <person name="Saurin W."/>
            <person name="Quetier F."/>
            <person name="Waterston R."/>
            <person name="Hood L."/>
            <person name="Weissenbach J."/>
        </authorList>
    </citation>
    <scope>NUCLEOTIDE SEQUENCE [LARGE SCALE GENOMIC DNA]</scope>
</reference>
<reference key="4">
    <citation type="submission" date="2005-09" db="EMBL/GenBank/DDBJ databases">
        <authorList>
            <person name="Mural R.J."/>
            <person name="Istrail S."/>
            <person name="Sutton G.G."/>
            <person name="Florea L."/>
            <person name="Halpern A.L."/>
            <person name="Mobarry C.M."/>
            <person name="Lippert R."/>
            <person name="Walenz B."/>
            <person name="Shatkay H."/>
            <person name="Dew I."/>
            <person name="Miller J.R."/>
            <person name="Flanigan M.J."/>
            <person name="Edwards N.J."/>
            <person name="Bolanos R."/>
            <person name="Fasulo D."/>
            <person name="Halldorsson B.V."/>
            <person name="Hannenhalli S."/>
            <person name="Turner R."/>
            <person name="Yooseph S."/>
            <person name="Lu F."/>
            <person name="Nusskern D.R."/>
            <person name="Shue B.C."/>
            <person name="Zheng X.H."/>
            <person name="Zhong F."/>
            <person name="Delcher A.L."/>
            <person name="Huson D.H."/>
            <person name="Kravitz S.A."/>
            <person name="Mouchard L."/>
            <person name="Reinert K."/>
            <person name="Remington K.A."/>
            <person name="Clark A.G."/>
            <person name="Waterman M.S."/>
            <person name="Eichler E.E."/>
            <person name="Adams M.D."/>
            <person name="Hunkapiller M.W."/>
            <person name="Myers E.W."/>
            <person name="Venter J.C."/>
        </authorList>
    </citation>
    <scope>NUCLEOTIDE SEQUENCE [LARGE SCALE GENOMIC DNA]</scope>
</reference>
<reference key="5">
    <citation type="journal article" date="2004" name="Genome Res.">
        <title>The status, quality, and expansion of the NIH full-length cDNA project: the Mammalian Gene Collection (MGC).</title>
        <authorList>
            <consortium name="The MGC Project Team"/>
        </authorList>
    </citation>
    <scope>NUCLEOTIDE SEQUENCE [LARGE SCALE MRNA]</scope>
    <source>
        <tissue>Lung</tissue>
        <tissue>Skin</tissue>
    </source>
</reference>
<reference key="6">
    <citation type="journal article" date="1999" name="Mol. Cell. Biol.">
        <title>The Borgs, a new family of Cdc42 and TC10 GTPase-interacting proteins.</title>
        <authorList>
            <person name="Joberty G."/>
            <person name="Perlungher R.R."/>
            <person name="Macara I.G."/>
        </authorList>
    </citation>
    <scope>INTERACTION WITH CDC42EP1; CDC42EP2 AND CDC42EP3</scope>
    <source>
        <tissue>Embryo</tissue>
    </source>
</reference>
<reference key="7">
    <citation type="journal article" date="2000" name="Nat. Cell Biol.">
        <title>The cell-polarity protein Par6 links Par3 and atypical protein kinase C to Cdc42.</title>
        <authorList>
            <person name="Joberty G."/>
            <person name="Petersen C."/>
            <person name="Gao L."/>
            <person name="Macara I.G."/>
        </authorList>
    </citation>
    <scope>INTERACTION WITH PARD6A AND PARD6G</scope>
    <scope>MUTAGENESIS OF GLN-67</scope>
</reference>
<reference key="8">
    <citation type="journal article" date="2001" name="Biochem. Biophys. Res. Commun.">
        <title>PIST: a novel PDZ/coiled-coil domain binding partner for the rho-family GTPase TC10.</title>
        <authorList>
            <person name="Neudauer C.L."/>
            <person name="Joberty G."/>
            <person name="Macara I.G."/>
        </authorList>
    </citation>
    <scope>INTERACTION WITH GOPC</scope>
    <scope>MUTAGENESIS OF THR-23 AND ASP-44</scope>
</reference>
<reference key="9">
    <citation type="journal article" date="2005" name="J. Biol. Chem.">
        <title>Regulation of cystic fibrosis transmembrane regulator trafficking and protein expression by a Rho family small GTPase TC10.</title>
        <authorList>
            <person name="Cheng J."/>
            <person name="Wang H."/>
            <person name="Guggino W.B."/>
        </authorList>
    </citation>
    <scope>INTERACTION WITH GOPC</scope>
    <scope>SUBCELLULAR LOCATION</scope>
    <scope>FUNCTION</scope>
</reference>
<dbReference type="EMBL" id="M31470">
    <property type="protein sequence ID" value="AAA36547.1"/>
    <property type="status" value="ALT_INIT"/>
    <property type="molecule type" value="mRNA"/>
</dbReference>
<dbReference type="EMBL" id="AF498976">
    <property type="protein sequence ID" value="AAM21123.1"/>
    <property type="status" value="ALT_INIT"/>
    <property type="molecule type" value="mRNA"/>
</dbReference>
<dbReference type="EMBL" id="AC018682">
    <property type="protein sequence ID" value="AAY14834.1"/>
    <property type="molecule type" value="Genomic_DNA"/>
</dbReference>
<dbReference type="EMBL" id="CH471053">
    <property type="protein sequence ID" value="EAX00251.1"/>
    <property type="molecule type" value="Genomic_DNA"/>
</dbReference>
<dbReference type="EMBL" id="BC056154">
    <property type="protein sequence ID" value="AAH56154.3"/>
    <property type="molecule type" value="mRNA"/>
</dbReference>
<dbReference type="EMBL" id="BC065291">
    <property type="protein sequence ID" value="AAH65291.2"/>
    <property type="molecule type" value="mRNA"/>
</dbReference>
<dbReference type="EMBL" id="BC070485">
    <property type="protein sequence ID" value="AAH70485.2"/>
    <property type="molecule type" value="mRNA"/>
</dbReference>
<dbReference type="EMBL" id="BC093805">
    <property type="protein sequence ID" value="AAH93805.2"/>
    <property type="molecule type" value="mRNA"/>
</dbReference>
<dbReference type="EMBL" id="BC101806">
    <property type="protein sequence ID" value="AAI01807.1"/>
    <property type="molecule type" value="mRNA"/>
</dbReference>
<dbReference type="CCDS" id="CCDS33191.1"/>
<dbReference type="PIR" id="D34788">
    <property type="entry name" value="TVHUC4"/>
</dbReference>
<dbReference type="RefSeq" id="NP_036381.2">
    <property type="nucleotide sequence ID" value="NM_012249.4"/>
</dbReference>
<dbReference type="PDB" id="2ATX">
    <property type="method" value="X-ray"/>
    <property type="resolution" value="2.65 A"/>
    <property type="chains" value="A/B=1-185"/>
</dbReference>
<dbReference type="PDBsum" id="2ATX"/>
<dbReference type="SMR" id="P17081"/>
<dbReference type="BioGRID" id="117001">
    <property type="interactions" value="437"/>
</dbReference>
<dbReference type="FunCoup" id="P17081">
    <property type="interactions" value="643"/>
</dbReference>
<dbReference type="IntAct" id="P17081">
    <property type="interactions" value="12"/>
</dbReference>
<dbReference type="STRING" id="9606.ENSP00000238738"/>
<dbReference type="ChEMBL" id="CHEMBL4295721"/>
<dbReference type="GlyGen" id="P17081">
    <property type="glycosylation" value="1 site"/>
</dbReference>
<dbReference type="iPTMnet" id="P17081"/>
<dbReference type="PhosphoSitePlus" id="P17081"/>
<dbReference type="SwissPalm" id="P17081"/>
<dbReference type="BioMuta" id="RHOQ"/>
<dbReference type="DMDM" id="62906861"/>
<dbReference type="jPOST" id="P17081"/>
<dbReference type="MassIVE" id="P17081"/>
<dbReference type="PaxDb" id="9606-ENSP00000238738"/>
<dbReference type="PeptideAtlas" id="P17081"/>
<dbReference type="ProteomicsDB" id="53452"/>
<dbReference type="Pumba" id="P17081"/>
<dbReference type="Antibodypedia" id="29975">
    <property type="antibodies" value="155 antibodies from 30 providers"/>
</dbReference>
<dbReference type="DNASU" id="23433"/>
<dbReference type="Ensembl" id="ENST00000238738.9">
    <property type="protein sequence ID" value="ENSP00000238738.4"/>
    <property type="gene ID" value="ENSG00000119729.12"/>
</dbReference>
<dbReference type="GeneID" id="23433"/>
<dbReference type="KEGG" id="hsa:23433"/>
<dbReference type="MANE-Select" id="ENST00000238738.9">
    <property type="protein sequence ID" value="ENSP00000238738.4"/>
    <property type="RefSeq nucleotide sequence ID" value="NM_012249.4"/>
    <property type="RefSeq protein sequence ID" value="NP_036381.2"/>
</dbReference>
<dbReference type="UCSC" id="uc061ivt.1">
    <property type="organism name" value="human"/>
</dbReference>
<dbReference type="AGR" id="HGNC:17736"/>
<dbReference type="CTD" id="23433"/>
<dbReference type="DisGeNET" id="23433"/>
<dbReference type="GeneCards" id="RHOQ"/>
<dbReference type="HGNC" id="HGNC:17736">
    <property type="gene designation" value="RHOQ"/>
</dbReference>
<dbReference type="HPA" id="ENSG00000119729">
    <property type="expression patterns" value="Low tissue specificity"/>
</dbReference>
<dbReference type="MIM" id="605857">
    <property type="type" value="gene"/>
</dbReference>
<dbReference type="neXtProt" id="NX_P17081"/>
<dbReference type="OpenTargets" id="ENSG00000119729"/>
<dbReference type="PharmGKB" id="PA134904280"/>
<dbReference type="VEuPathDB" id="HostDB:ENSG00000119729"/>
<dbReference type="eggNOG" id="KOG0393">
    <property type="taxonomic scope" value="Eukaryota"/>
</dbReference>
<dbReference type="GeneTree" id="ENSGT00940000155970"/>
<dbReference type="HOGENOM" id="CLU_041217_21_3_1"/>
<dbReference type="InParanoid" id="P17081"/>
<dbReference type="OMA" id="AESYAEC"/>
<dbReference type="OrthoDB" id="8830751at2759"/>
<dbReference type="PAN-GO" id="P17081">
    <property type="GO annotations" value="5 GO annotations based on evolutionary models"/>
</dbReference>
<dbReference type="PhylomeDB" id="P17081"/>
<dbReference type="TreeFam" id="TF101109"/>
<dbReference type="PathwayCommons" id="P17081"/>
<dbReference type="Reactome" id="R-HSA-1445148">
    <property type="pathway name" value="Translocation of SLC2A4 (GLUT4) to the plasma membrane"/>
</dbReference>
<dbReference type="Reactome" id="R-HSA-5627083">
    <property type="pathway name" value="RHO GTPases regulate CFTR trafficking"/>
</dbReference>
<dbReference type="Reactome" id="R-HSA-9013406">
    <property type="pathway name" value="RHOQ GTPase cycle"/>
</dbReference>
<dbReference type="SignaLink" id="P17081"/>
<dbReference type="SIGNOR" id="P17081"/>
<dbReference type="BioGRID-ORCS" id="23433">
    <property type="hits" value="549 hits in 1116 CRISPR screens"/>
</dbReference>
<dbReference type="ChiTaRS" id="RHOQ">
    <property type="organism name" value="human"/>
</dbReference>
<dbReference type="EvolutionaryTrace" id="P17081"/>
<dbReference type="GeneWiki" id="RHOQ"/>
<dbReference type="GenomeRNAi" id="23433"/>
<dbReference type="Pharos" id="P17081">
    <property type="development level" value="Tbio"/>
</dbReference>
<dbReference type="PRO" id="PR:P17081"/>
<dbReference type="Proteomes" id="UP000005640">
    <property type="component" value="Chromosome 2"/>
</dbReference>
<dbReference type="RNAct" id="P17081">
    <property type="molecule type" value="protein"/>
</dbReference>
<dbReference type="Bgee" id="ENSG00000119729">
    <property type="expression patterns" value="Expressed in left ventricle myocardium and 192 other cell types or tissues"/>
</dbReference>
<dbReference type="ExpressionAtlas" id="P17081">
    <property type="expression patterns" value="baseline and differential"/>
</dbReference>
<dbReference type="GO" id="GO:0005884">
    <property type="term" value="C:actin filament"/>
    <property type="evidence" value="ECO:0000314"/>
    <property type="project" value="BHF-UCL"/>
</dbReference>
<dbReference type="GO" id="GO:0070062">
    <property type="term" value="C:extracellular exosome"/>
    <property type="evidence" value="ECO:0007005"/>
    <property type="project" value="UniProtKB"/>
</dbReference>
<dbReference type="GO" id="GO:0030660">
    <property type="term" value="C:Golgi-associated vesicle membrane"/>
    <property type="evidence" value="ECO:0000304"/>
    <property type="project" value="Reactome"/>
</dbReference>
<dbReference type="GO" id="GO:0045121">
    <property type="term" value="C:membrane raft"/>
    <property type="evidence" value="ECO:0007669"/>
    <property type="project" value="Ensembl"/>
</dbReference>
<dbReference type="GO" id="GO:0005886">
    <property type="term" value="C:plasma membrane"/>
    <property type="evidence" value="ECO:0000314"/>
    <property type="project" value="BHF-UCL"/>
</dbReference>
<dbReference type="GO" id="GO:0032427">
    <property type="term" value="F:GBD domain binding"/>
    <property type="evidence" value="ECO:0000353"/>
    <property type="project" value="BHF-UCL"/>
</dbReference>
<dbReference type="GO" id="GO:0005525">
    <property type="term" value="F:GTP binding"/>
    <property type="evidence" value="ECO:0000318"/>
    <property type="project" value="GO_Central"/>
</dbReference>
<dbReference type="GO" id="GO:0003924">
    <property type="term" value="F:GTPase activity"/>
    <property type="evidence" value="ECO:0000314"/>
    <property type="project" value="BHF-UCL"/>
</dbReference>
<dbReference type="GO" id="GO:0005522">
    <property type="term" value="F:profilin binding"/>
    <property type="evidence" value="ECO:0000353"/>
    <property type="project" value="BHF-UCL"/>
</dbReference>
<dbReference type="GO" id="GO:0019901">
    <property type="term" value="F:protein kinase binding"/>
    <property type="evidence" value="ECO:0000318"/>
    <property type="project" value="GO_Central"/>
</dbReference>
<dbReference type="GO" id="GO:0007015">
    <property type="term" value="P:actin filament organization"/>
    <property type="evidence" value="ECO:0000318"/>
    <property type="project" value="GO_Central"/>
</dbReference>
<dbReference type="GO" id="GO:0032869">
    <property type="term" value="P:cellular response to insulin stimulus"/>
    <property type="evidence" value="ECO:0000315"/>
    <property type="project" value="BHF-UCL"/>
</dbReference>
<dbReference type="GO" id="GO:0030866">
    <property type="term" value="P:cortical actin cytoskeleton organization"/>
    <property type="evidence" value="ECO:0000315"/>
    <property type="project" value="BHF-UCL"/>
</dbReference>
<dbReference type="GO" id="GO:0006897">
    <property type="term" value="P:endocytosis"/>
    <property type="evidence" value="ECO:0000318"/>
    <property type="project" value="GO_Central"/>
</dbReference>
<dbReference type="GO" id="GO:0030010">
    <property type="term" value="P:establishment of cell polarity"/>
    <property type="evidence" value="ECO:0000318"/>
    <property type="project" value="GO_Central"/>
</dbReference>
<dbReference type="GO" id="GO:0046039">
    <property type="term" value="P:GTP metabolic process"/>
    <property type="evidence" value="ECO:0000314"/>
    <property type="project" value="BHF-UCL"/>
</dbReference>
<dbReference type="GO" id="GO:0008286">
    <property type="term" value="P:insulin receptor signaling pathway"/>
    <property type="evidence" value="ECO:0000315"/>
    <property type="project" value="BHF-UCL"/>
</dbReference>
<dbReference type="GO" id="GO:1903077">
    <property type="term" value="P:negative regulation of protein localization to plasma membrane"/>
    <property type="evidence" value="ECO:0000315"/>
    <property type="project" value="BHF-UCL"/>
</dbReference>
<dbReference type="GO" id="GO:0046326">
    <property type="term" value="P:positive regulation of D-glucose import"/>
    <property type="evidence" value="ECO:0000315"/>
    <property type="project" value="BHF-UCL"/>
</dbReference>
<dbReference type="GO" id="GO:0051491">
    <property type="term" value="P:positive regulation of filopodium assembly"/>
    <property type="evidence" value="ECO:0000314"/>
    <property type="project" value="BHF-UCL"/>
</dbReference>
<dbReference type="GO" id="GO:0045944">
    <property type="term" value="P:positive regulation of transcription by RNA polymerase II"/>
    <property type="evidence" value="ECO:0000314"/>
    <property type="project" value="BHF-UCL"/>
</dbReference>
<dbReference type="GO" id="GO:0032956">
    <property type="term" value="P:regulation of actin cytoskeleton organization"/>
    <property type="evidence" value="ECO:0000305"/>
    <property type="project" value="BHF-UCL"/>
</dbReference>
<dbReference type="GO" id="GO:0008360">
    <property type="term" value="P:regulation of cell shape"/>
    <property type="evidence" value="ECO:0007669"/>
    <property type="project" value="Ensembl"/>
</dbReference>
<dbReference type="GO" id="GO:0007165">
    <property type="term" value="P:signal transduction"/>
    <property type="evidence" value="ECO:0000318"/>
    <property type="project" value="GO_Central"/>
</dbReference>
<dbReference type="GO" id="GO:0007264">
    <property type="term" value="P:small GTPase-mediated signal transduction"/>
    <property type="evidence" value="ECO:0007669"/>
    <property type="project" value="InterPro"/>
</dbReference>
<dbReference type="CDD" id="cd04135">
    <property type="entry name" value="Tc10"/>
    <property type="match status" value="1"/>
</dbReference>
<dbReference type="FunFam" id="3.40.50.300:FF:000438">
    <property type="entry name" value="Rho-related GTP-binding protein RhoJ"/>
    <property type="match status" value="1"/>
</dbReference>
<dbReference type="Gene3D" id="3.40.50.300">
    <property type="entry name" value="P-loop containing nucleotide triphosphate hydrolases"/>
    <property type="match status" value="1"/>
</dbReference>
<dbReference type="InterPro" id="IPR027417">
    <property type="entry name" value="P-loop_NTPase"/>
</dbReference>
<dbReference type="InterPro" id="IPR005225">
    <property type="entry name" value="Small_GTP-bd"/>
</dbReference>
<dbReference type="InterPro" id="IPR001806">
    <property type="entry name" value="Small_GTPase"/>
</dbReference>
<dbReference type="InterPro" id="IPR003578">
    <property type="entry name" value="Small_GTPase_Rho"/>
</dbReference>
<dbReference type="NCBIfam" id="TIGR00231">
    <property type="entry name" value="small_GTP"/>
    <property type="match status" value="1"/>
</dbReference>
<dbReference type="PANTHER" id="PTHR24072">
    <property type="entry name" value="RHO FAMILY GTPASE"/>
    <property type="match status" value="1"/>
</dbReference>
<dbReference type="Pfam" id="PF00071">
    <property type="entry name" value="Ras"/>
    <property type="match status" value="1"/>
</dbReference>
<dbReference type="PRINTS" id="PR00449">
    <property type="entry name" value="RASTRNSFRMNG"/>
</dbReference>
<dbReference type="SMART" id="SM00175">
    <property type="entry name" value="RAB"/>
    <property type="match status" value="1"/>
</dbReference>
<dbReference type="SMART" id="SM00173">
    <property type="entry name" value="RAS"/>
    <property type="match status" value="1"/>
</dbReference>
<dbReference type="SMART" id="SM00174">
    <property type="entry name" value="RHO"/>
    <property type="match status" value="1"/>
</dbReference>
<dbReference type="SUPFAM" id="SSF52540">
    <property type="entry name" value="P-loop containing nucleoside triphosphate hydrolases"/>
    <property type="match status" value="1"/>
</dbReference>
<dbReference type="PROSITE" id="PS51420">
    <property type="entry name" value="RHO"/>
    <property type="match status" value="1"/>
</dbReference>
<accession>P17081</accession>
<accession>D6W5A6</accession>
<accession>Q0VGN1</accession>
<accession>Q52LS8</accession>
<accession>Q53SJ1</accession>
<accession>Q6NS39</accession>
<accession>Q6P146</accession>
<accession>Q7Z480</accession>
<feature type="chain" id="PRO_0000198871" description="Rho-related GTP-binding protein RhoQ">
    <location>
        <begin position="1"/>
        <end position="202"/>
    </location>
</feature>
<feature type="propeptide" id="PRO_0000281222" description="Removed in mature form" evidence="1">
    <location>
        <begin position="203"/>
        <end position="205"/>
    </location>
</feature>
<feature type="short sequence motif" description="Effector region" evidence="1">
    <location>
        <begin position="38"/>
        <end position="46"/>
    </location>
</feature>
<feature type="binding site" evidence="1">
    <location>
        <begin position="16"/>
        <end position="23"/>
    </location>
    <ligand>
        <name>GTP</name>
        <dbReference type="ChEBI" id="CHEBI:37565"/>
    </ligand>
</feature>
<feature type="binding site" evidence="1">
    <location>
        <begin position="63"/>
        <end position="67"/>
    </location>
    <ligand>
        <name>GTP</name>
        <dbReference type="ChEBI" id="CHEBI:37565"/>
    </ligand>
</feature>
<feature type="binding site" evidence="1">
    <location>
        <begin position="121"/>
        <end position="124"/>
    </location>
    <ligand>
        <name>GTP</name>
        <dbReference type="ChEBI" id="CHEBI:37565"/>
    </ligand>
</feature>
<feature type="modified residue" description="Cysteine methyl ester" evidence="1">
    <location>
        <position position="202"/>
    </location>
</feature>
<feature type="lipid moiety-binding region" description="S-farnesyl cysteine" evidence="1">
    <location>
        <position position="202"/>
    </location>
</feature>
<feature type="mutagenesis site" description="Loss of interaction with GOPC." evidence="4">
    <original>T</original>
    <variation>N</variation>
    <location>
        <position position="23"/>
    </location>
</feature>
<feature type="mutagenesis site" description="Loss of interaction with GOPC." evidence="4">
    <original>D</original>
    <variation>A</variation>
    <location>
        <position position="44"/>
    </location>
</feature>
<feature type="mutagenesis site" description="Constitutively active. Interacts with PARD6 proteins and GOPC." evidence="3">
    <original>Q</original>
    <variation>L</variation>
    <location>
        <position position="67"/>
    </location>
</feature>
<feature type="strand" evidence="7">
    <location>
        <begin position="6"/>
        <end position="16"/>
    </location>
</feature>
<feature type="helix" evidence="7">
    <location>
        <begin position="22"/>
        <end position="31"/>
    </location>
</feature>
<feature type="strand" evidence="7">
    <location>
        <begin position="46"/>
        <end position="54"/>
    </location>
</feature>
<feature type="strand" evidence="7">
    <location>
        <begin position="56"/>
        <end position="62"/>
    </location>
</feature>
<feature type="strand" evidence="7">
    <location>
        <begin position="67"/>
        <end position="70"/>
    </location>
</feature>
<feature type="turn" evidence="7">
    <location>
        <begin position="71"/>
        <end position="73"/>
    </location>
</feature>
<feature type="helix" evidence="7">
    <location>
        <begin position="74"/>
        <end position="77"/>
    </location>
</feature>
<feature type="strand" evidence="7">
    <location>
        <begin position="82"/>
        <end position="89"/>
    </location>
</feature>
<feature type="helix" evidence="7">
    <location>
        <begin position="93"/>
        <end position="101"/>
    </location>
</feature>
<feature type="helix" evidence="7">
    <location>
        <begin position="103"/>
        <end position="110"/>
    </location>
</feature>
<feature type="strand" evidence="7">
    <location>
        <begin position="116"/>
        <end position="121"/>
    </location>
</feature>
<feature type="helix" evidence="7">
    <location>
        <begin position="129"/>
        <end position="135"/>
    </location>
</feature>
<feature type="turn" evidence="7">
    <location>
        <begin position="136"/>
        <end position="139"/>
    </location>
</feature>
<feature type="helix" evidence="7">
    <location>
        <begin position="145"/>
        <end position="155"/>
    </location>
</feature>
<feature type="strand" evidence="7">
    <location>
        <begin position="160"/>
        <end position="162"/>
    </location>
</feature>
<feature type="turn" evidence="7">
    <location>
        <begin position="165"/>
        <end position="167"/>
    </location>
</feature>
<feature type="helix" evidence="7">
    <location>
        <begin position="171"/>
        <end position="183"/>
    </location>
</feature>
<comment type="function">
    <text evidence="5">Plasma membrane-associated small GTPase which cycles between an active GTP-bound and an inactive GDP-bound state. In active state binds to a variety of effector proteins to regulate cellular responses. Involved in epithelial cell polarization processes. May play a role in CFTR trafficking to the plasma membrane. Causes the formation of thin, actin-rich surface projections called filopodia.</text>
</comment>
<comment type="activity regulation">
    <text>Regulated by guanine nucleotide exchange factors (GEFs) which promote the exchange of bound GDP for free GTP, GTPase activating proteins (GAPs) which increase the GTP hydrolysis activity, and GDP dissociation inhibitors which inhibit the dissociation of the nucleotide from the GTPase.</text>
</comment>
<comment type="subunit">
    <text evidence="1 2 3 4 5">Interacts with CDC42EP4 in a GTP-dependent manner. Interacts with ARHGAP33/TCGAP (By similarity). Interacts with CDC42EP1, CDC42EP2, CDC42EP3, PARD6A, PARD6G (and probably PARD6B) in a GTP-dependent manner. Part of a quaternary complex containing PARD3, some PARD6 protein (PARD6A, PARD6B or PARD6G) and some atypical PKC protein (PRKCI or PRKCZ). Interacts with EXO70 in a GTP-dependent manner. Interacts with GOPC.</text>
</comment>
<comment type="interaction">
    <interactant intactId="EBI-689202">
        <id>P17081</id>
    </interactant>
    <interactant intactId="EBI-11524452">
        <id>Q8N9N5-2</id>
        <label>BANP</label>
    </interactant>
    <organismsDiffer>false</organismsDiffer>
    <experiments>3</experiments>
</comment>
<comment type="interaction">
    <interactant intactId="EBI-689202">
        <id>P17081</id>
    </interactant>
    <interactant intactId="EBI-10269566">
        <id>Q8NDC4</id>
        <label>MORN4</label>
    </interactant>
    <organismsDiffer>false</organismsDiffer>
    <experiments>3</experiments>
</comment>
<comment type="interaction">
    <interactant intactId="EBI-689202">
        <id>P17081</id>
    </interactant>
    <interactant intactId="EBI-741158">
        <id>Q96HA8</id>
        <label>NTAQ1</label>
    </interactant>
    <organismsDiffer>false</organismsDiffer>
    <experiments>3</experiments>
</comment>
<comment type="interaction">
    <interactant intactId="EBI-689202">
        <id>P17081</id>
    </interactant>
    <interactant intactId="EBI-295391">
        <id>Q9BYG5</id>
        <label>PARD6B</label>
    </interactant>
    <organismsDiffer>false</organismsDiffer>
    <experiments>3</experiments>
</comment>
<comment type="interaction">
    <interactant intactId="EBI-689202">
        <id>P17081</id>
    </interactant>
    <interactant intactId="EBI-740727">
        <id>Q8TAU3</id>
        <label>ZNF417</label>
    </interactant>
    <organismsDiffer>false</organismsDiffer>
    <experiments>3</experiments>
</comment>
<comment type="subcellular location">
    <subcellularLocation>
        <location evidence="5">Cytoplasm</location>
    </subcellularLocation>
    <subcellularLocation>
        <location evidence="5">Cell membrane</location>
        <topology evidence="5">Lipid-anchor</topology>
    </subcellularLocation>
</comment>
<comment type="PTM">
    <text>May be post-translationally modified by both palmitoylation and polyisoprenylation.</text>
</comment>
<comment type="similarity">
    <text evidence="6">Belongs to the small GTPase superfamily. Rho family.</text>
</comment>
<comment type="sequence caution" evidence="6">
    <conflict type="erroneous initiation">
        <sequence resource="EMBL-CDS" id="AAA36547"/>
    </conflict>
</comment>
<comment type="sequence caution" evidence="6">
    <conflict type="erroneous initiation">
        <sequence resource="EMBL-CDS" id="AAM21123"/>
    </conflict>
</comment>
<proteinExistence type="evidence at protein level"/>
<evidence type="ECO:0000250" key="1"/>
<evidence type="ECO:0000269" key="2">
    <source>
    </source>
</evidence>
<evidence type="ECO:0000269" key="3">
    <source>
    </source>
</evidence>
<evidence type="ECO:0000269" key="4">
    <source>
    </source>
</evidence>
<evidence type="ECO:0000269" key="5">
    <source>
    </source>
</evidence>
<evidence type="ECO:0000305" key="6"/>
<evidence type="ECO:0007829" key="7">
    <source>
        <dbReference type="PDB" id="2ATX"/>
    </source>
</evidence>
<keyword id="KW-0002">3D-structure</keyword>
<keyword id="KW-1003">Cell membrane</keyword>
<keyword id="KW-0963">Cytoplasm</keyword>
<keyword id="KW-0342">GTP-binding</keyword>
<keyword id="KW-0449">Lipoprotein</keyword>
<keyword id="KW-0472">Membrane</keyword>
<keyword id="KW-0488">Methylation</keyword>
<keyword id="KW-0547">Nucleotide-binding</keyword>
<keyword id="KW-0636">Prenylation</keyword>
<keyword id="KW-1267">Proteomics identification</keyword>
<keyword id="KW-1185">Reference proteome</keyword>
<protein>
    <recommendedName>
        <fullName>Rho-related GTP-binding protein RhoQ</fullName>
    </recommendedName>
    <alternativeName>
        <fullName>Ras-like protein TC10</fullName>
    </alternativeName>
    <alternativeName>
        <fullName>Ras-like protein family member 7A</fullName>
    </alternativeName>
</protein>
<organism>
    <name type="scientific">Homo sapiens</name>
    <name type="common">Human</name>
    <dbReference type="NCBI Taxonomy" id="9606"/>
    <lineage>
        <taxon>Eukaryota</taxon>
        <taxon>Metazoa</taxon>
        <taxon>Chordata</taxon>
        <taxon>Craniata</taxon>
        <taxon>Vertebrata</taxon>
        <taxon>Euteleostomi</taxon>
        <taxon>Mammalia</taxon>
        <taxon>Eutheria</taxon>
        <taxon>Euarchontoglires</taxon>
        <taxon>Primates</taxon>
        <taxon>Haplorrhini</taxon>
        <taxon>Catarrhini</taxon>
        <taxon>Hominidae</taxon>
        <taxon>Homo</taxon>
    </lineage>
</organism>
<sequence length="205" mass="22659">MAHGPGALMLKCVVVGDGAVGKTCLLMSYANDAFPEEYVPTVFDHYAVSVTVGGKQYLLGLYDTAGQEDYDRLRPLSYPMTDVFLICFSVVNPASFQNVKEEWVPELKEYAPNVPFLLIGTQIDLRDDPKTLARLNDMKEKPICVEQGQKLAKEIGACCYVECSALTQKGLKTVFDEAIIAILTPKKHTVKKRIGSRCINCCLIT</sequence>